<name>E13H_TOBAC</name>
<evidence type="ECO:0000250" key="1">
    <source>
        <dbReference type="UniProtKB" id="O22317"/>
    </source>
</evidence>
<evidence type="ECO:0000250" key="2">
    <source>
        <dbReference type="UniProtKB" id="P15797"/>
    </source>
</evidence>
<evidence type="ECO:0000255" key="3"/>
<evidence type="ECO:0000305" key="4"/>
<proteinExistence type="evidence at protein level"/>
<feature type="signal peptide" evidence="3">
    <location>
        <begin position="1"/>
        <end position="24"/>
    </location>
</feature>
<feature type="chain" id="PRO_0000011878" description="Glucan endo-1,3-beta-glucosidase, acidic isoform PR-Q'">
    <location>
        <begin position="25"/>
        <end position="339"/>
    </location>
</feature>
<feature type="active site" description="Proton donor" evidence="1">
    <location>
        <position position="118"/>
    </location>
</feature>
<feature type="active site" description="Nucleophile" evidence="1">
    <location>
        <position position="262"/>
    </location>
</feature>
<feature type="modified residue" description="Pyrrolidone carboxylic acid" evidence="2">
    <location>
        <position position="25"/>
    </location>
</feature>
<feature type="sequence conflict" description="In Ref. 2; AA sequence." evidence="4" ref="2">
    <original>R</original>
    <variation>A</variation>
    <location>
        <position position="297"/>
    </location>
</feature>
<keyword id="KW-0052">Apoplast</keyword>
<keyword id="KW-0903">Direct protein sequencing</keyword>
<keyword id="KW-0326">Glycosidase</keyword>
<keyword id="KW-0378">Hydrolase</keyword>
<keyword id="KW-0611">Plant defense</keyword>
<keyword id="KW-0873">Pyrrolidone carboxylic acid</keyword>
<keyword id="KW-1185">Reference proteome</keyword>
<keyword id="KW-0964">Secreted</keyword>
<keyword id="KW-0732">Signal</keyword>
<protein>
    <recommendedName>
        <fullName>Glucan endo-1,3-beta-glucosidase, acidic isoform PR-Q'</fullName>
        <ecNumber>3.2.1.39</ecNumber>
    </recommendedName>
    <alternativeName>
        <fullName>(1-&gt;3)-beta-glucan endohydrolase</fullName>
        <shortName>(1-&gt;3)-beta-glucanase</shortName>
    </alternativeName>
    <alternativeName>
        <fullName>Beta-1,3-endoglucanase</fullName>
    </alternativeName>
    <alternativeName>
        <fullName>PR-35</fullName>
    </alternativeName>
</protein>
<organism>
    <name type="scientific">Nicotiana tabacum</name>
    <name type="common">Common tobacco</name>
    <dbReference type="NCBI Taxonomy" id="4097"/>
    <lineage>
        <taxon>Eukaryota</taxon>
        <taxon>Viridiplantae</taxon>
        <taxon>Streptophyta</taxon>
        <taxon>Embryophyta</taxon>
        <taxon>Tracheophyta</taxon>
        <taxon>Spermatophyta</taxon>
        <taxon>Magnoliopsida</taxon>
        <taxon>eudicotyledons</taxon>
        <taxon>Gunneridae</taxon>
        <taxon>Pentapetalae</taxon>
        <taxon>asterids</taxon>
        <taxon>lamiids</taxon>
        <taxon>Solanales</taxon>
        <taxon>Solanaceae</taxon>
        <taxon>Nicotianoideae</taxon>
        <taxon>Nicotianeae</taxon>
        <taxon>Nicotiana</taxon>
    </lineage>
</organism>
<reference key="1">
    <citation type="journal article" date="1990" name="Plant Mol. Biol.">
        <title>Evidence for a third structural class of beta-1,3-glucanase in tobacco.</title>
        <authorList>
            <person name="Payne G."/>
            <person name="Ward E."/>
            <person name="Gaffney T."/>
            <person name="Ahl Goy P."/>
            <person name="Moyer M."/>
            <person name="Harper A."/>
            <person name="Meins F. Jr."/>
            <person name="Ryals J."/>
        </authorList>
    </citation>
    <scope>NUCLEOTIDE SEQUENCE [MRNA]</scope>
    <scope>PARTIAL PROTEIN SEQUENCE</scope>
    <source>
        <strain>cv. Xanthi</strain>
    </source>
</reference>
<reference key="2">
    <citation type="journal article" date="1989" name="Proc. Natl. Acad. Sci. U.S.A.">
        <title>Characterization of vacuolar and extracellular beta(1,3)-glucanases of tobacco: evidence for a strictly compartmentalized plant defense system.</title>
        <authorList>
            <person name="van den Bulcke M."/>
            <person name="Bauw G."/>
            <person name="Castresana C."/>
            <person name="van Montagu M."/>
            <person name="Vandekerckhove J."/>
        </authorList>
    </citation>
    <scope>PROTEIN SEQUENCE OF 57-69; 112-126; 281-291; 297-321 AND 333-339</scope>
</reference>
<accession>P36401</accession>
<dbReference type="EC" id="3.2.1.39"/>
<dbReference type="EMBL" id="X54456">
    <property type="protein sequence ID" value="CAA38324.1"/>
    <property type="status" value="ALT_INIT"/>
    <property type="molecule type" value="mRNA"/>
</dbReference>
<dbReference type="PIR" id="S12402">
    <property type="entry name" value="S12402"/>
</dbReference>
<dbReference type="RefSeq" id="NP_001412868.1">
    <property type="nucleotide sequence ID" value="NM_001425939.1"/>
</dbReference>
<dbReference type="RefSeq" id="XP_016495818.1">
    <property type="nucleotide sequence ID" value="XM_016640332.1"/>
</dbReference>
<dbReference type="SMR" id="P36401"/>
<dbReference type="STRING" id="4097.P36401"/>
<dbReference type="CAZy" id="GH17">
    <property type="family name" value="Glycoside Hydrolase Family 17"/>
</dbReference>
<dbReference type="PaxDb" id="4097-P36401"/>
<dbReference type="GeneID" id="107814850"/>
<dbReference type="KEGG" id="nta:107814850"/>
<dbReference type="OMA" id="QDNANTW"/>
<dbReference type="OrthoDB" id="941679at2759"/>
<dbReference type="PhylomeDB" id="P36401"/>
<dbReference type="Proteomes" id="UP000084051">
    <property type="component" value="Unplaced"/>
</dbReference>
<dbReference type="GO" id="GO:0048046">
    <property type="term" value="C:apoplast"/>
    <property type="evidence" value="ECO:0007669"/>
    <property type="project" value="UniProtKB-SubCell"/>
</dbReference>
<dbReference type="GO" id="GO:0042973">
    <property type="term" value="F:glucan endo-1,3-beta-D-glucosidase activity"/>
    <property type="evidence" value="ECO:0007669"/>
    <property type="project" value="UniProtKB-EC"/>
</dbReference>
<dbReference type="GO" id="GO:0005975">
    <property type="term" value="P:carbohydrate metabolic process"/>
    <property type="evidence" value="ECO:0007669"/>
    <property type="project" value="InterPro"/>
</dbReference>
<dbReference type="GO" id="GO:0006952">
    <property type="term" value="P:defense response"/>
    <property type="evidence" value="ECO:0007669"/>
    <property type="project" value="UniProtKB-KW"/>
</dbReference>
<dbReference type="FunFam" id="3.20.20.80:FF:000010">
    <property type="entry name" value="glucan endo-1,3-beta-glucosidase, basic"/>
    <property type="match status" value="1"/>
</dbReference>
<dbReference type="Gene3D" id="3.20.20.80">
    <property type="entry name" value="Glycosidases"/>
    <property type="match status" value="1"/>
</dbReference>
<dbReference type="InterPro" id="IPR000490">
    <property type="entry name" value="Glyco_hydro_17"/>
</dbReference>
<dbReference type="InterPro" id="IPR044965">
    <property type="entry name" value="Glyco_hydro_17_plant"/>
</dbReference>
<dbReference type="InterPro" id="IPR017853">
    <property type="entry name" value="Glycoside_hydrolase_SF"/>
</dbReference>
<dbReference type="PANTHER" id="PTHR32227">
    <property type="entry name" value="GLUCAN ENDO-1,3-BETA-GLUCOSIDASE BG1-RELATED-RELATED"/>
    <property type="match status" value="1"/>
</dbReference>
<dbReference type="Pfam" id="PF00332">
    <property type="entry name" value="Glyco_hydro_17"/>
    <property type="match status" value="1"/>
</dbReference>
<dbReference type="SUPFAM" id="SSF51445">
    <property type="entry name" value="(Trans)glycosidases"/>
    <property type="match status" value="1"/>
</dbReference>
<dbReference type="PROSITE" id="PS00587">
    <property type="entry name" value="GLYCOSYL_HYDROL_F17"/>
    <property type="match status" value="1"/>
</dbReference>
<sequence>MAHLIVTLLLLSVLTLATLDFTGAQAGVCYGRQGNGLPSPADVVSLCNRNNIRRMRIYDPDQPTLEALRGSNIELMLGVPNPDLENVAASQANADTWVQNNVRNYGNVKFRYIAVGNEVSPLNENSKYVPVLLNAMRNIQTAISGAGLGNQIKVSTAIETGLTTDTSPPSNGRFKDDVRQFIEPIINFLVTNRAPLLVNLYPYFAIANNADIKLEYALFTSSEVVVNDNGRGYRNLFDAILDATYSALEKASGSSLEIVVSESGWPSAGAGQLTSIDNARTYNNNLISHVKGGSPKRPSGPIETYVFALFDEDQKDPEIEKHFGLFSANMQPKYQISFN</sequence>
<comment type="function">
    <text>Implicated in the defense of plants against pathogens.</text>
</comment>
<comment type="catalytic activity">
    <reaction>
        <text>Hydrolysis of (1-&gt;3)-beta-D-glucosidic linkages in (1-&gt;3)-beta-D-glucans.</text>
        <dbReference type="EC" id="3.2.1.39"/>
    </reaction>
</comment>
<comment type="subcellular location">
    <subcellularLocation>
        <location>Secreted</location>
        <location>Extracellular space</location>
        <location>Apoplast</location>
    </subcellularLocation>
</comment>
<comment type="induction">
    <text>Accumulates following infection.</text>
</comment>
<comment type="PTM">
    <text>The N-terminus is blocked.</text>
</comment>
<comment type="similarity">
    <text evidence="4">Belongs to the glycosyl hydrolase 17 family.</text>
</comment>
<comment type="sequence caution" evidence="4">
    <conflict type="erroneous initiation">
        <sequence resource="EMBL-CDS" id="CAA38324"/>
    </conflict>
</comment>